<dbReference type="EMBL" id="CP000947">
    <property type="protein sequence ID" value="ACA31200.1"/>
    <property type="molecule type" value="Genomic_DNA"/>
</dbReference>
<dbReference type="RefSeq" id="WP_011609129.1">
    <property type="nucleotide sequence ID" value="NC_010519.1"/>
</dbReference>
<dbReference type="SMR" id="B0UUH4"/>
<dbReference type="STRING" id="228400.HSM_1453"/>
<dbReference type="GeneID" id="31487751"/>
<dbReference type="KEGG" id="hsm:HSM_1453"/>
<dbReference type="HOGENOM" id="CLU_105066_2_0_6"/>
<dbReference type="GO" id="GO:0005694">
    <property type="term" value="C:chromosome"/>
    <property type="evidence" value="ECO:0007669"/>
    <property type="project" value="InterPro"/>
</dbReference>
<dbReference type="GO" id="GO:0005829">
    <property type="term" value="C:cytosol"/>
    <property type="evidence" value="ECO:0007669"/>
    <property type="project" value="TreeGrafter"/>
</dbReference>
<dbReference type="GO" id="GO:0003677">
    <property type="term" value="F:DNA binding"/>
    <property type="evidence" value="ECO:0007669"/>
    <property type="project" value="UniProtKB-UniRule"/>
</dbReference>
<dbReference type="GO" id="GO:0030527">
    <property type="term" value="F:structural constituent of chromatin"/>
    <property type="evidence" value="ECO:0007669"/>
    <property type="project" value="InterPro"/>
</dbReference>
<dbReference type="GO" id="GO:0006310">
    <property type="term" value="P:DNA recombination"/>
    <property type="evidence" value="ECO:0007669"/>
    <property type="project" value="UniProtKB-UniRule"/>
</dbReference>
<dbReference type="GO" id="GO:0006355">
    <property type="term" value="P:regulation of DNA-templated transcription"/>
    <property type="evidence" value="ECO:0007669"/>
    <property type="project" value="UniProtKB-UniRule"/>
</dbReference>
<dbReference type="GO" id="GO:0006417">
    <property type="term" value="P:regulation of translation"/>
    <property type="evidence" value="ECO:0007669"/>
    <property type="project" value="UniProtKB-UniRule"/>
</dbReference>
<dbReference type="CDD" id="cd13836">
    <property type="entry name" value="IHF_B"/>
    <property type="match status" value="1"/>
</dbReference>
<dbReference type="FunFam" id="4.10.520.10:FF:000003">
    <property type="entry name" value="Integration host factor subunit beta"/>
    <property type="match status" value="1"/>
</dbReference>
<dbReference type="Gene3D" id="4.10.520.10">
    <property type="entry name" value="IHF-like DNA-binding proteins"/>
    <property type="match status" value="1"/>
</dbReference>
<dbReference type="HAMAP" id="MF_00381">
    <property type="entry name" value="IHF_beta"/>
    <property type="match status" value="1"/>
</dbReference>
<dbReference type="InterPro" id="IPR000119">
    <property type="entry name" value="Hist_DNA-bd"/>
</dbReference>
<dbReference type="InterPro" id="IPR020816">
    <property type="entry name" value="Histone-like_DNA-bd_CS"/>
</dbReference>
<dbReference type="InterPro" id="IPR010992">
    <property type="entry name" value="IHF-like_DNA-bd_dom_sf"/>
</dbReference>
<dbReference type="InterPro" id="IPR005685">
    <property type="entry name" value="IHF_beta"/>
</dbReference>
<dbReference type="NCBIfam" id="TIGR00988">
    <property type="entry name" value="hip"/>
    <property type="match status" value="1"/>
</dbReference>
<dbReference type="NCBIfam" id="NF001222">
    <property type="entry name" value="PRK00199.1"/>
    <property type="match status" value="1"/>
</dbReference>
<dbReference type="PANTHER" id="PTHR33175">
    <property type="entry name" value="DNA-BINDING PROTEIN HU"/>
    <property type="match status" value="1"/>
</dbReference>
<dbReference type="PANTHER" id="PTHR33175:SF5">
    <property type="entry name" value="INTEGRATION HOST FACTOR SUBUNIT BETA"/>
    <property type="match status" value="1"/>
</dbReference>
<dbReference type="Pfam" id="PF00216">
    <property type="entry name" value="Bac_DNA_binding"/>
    <property type="match status" value="1"/>
</dbReference>
<dbReference type="PRINTS" id="PR01727">
    <property type="entry name" value="DNABINDINGHU"/>
</dbReference>
<dbReference type="SMART" id="SM00411">
    <property type="entry name" value="BHL"/>
    <property type="match status" value="1"/>
</dbReference>
<dbReference type="SUPFAM" id="SSF47729">
    <property type="entry name" value="IHF-like DNA-binding proteins"/>
    <property type="match status" value="1"/>
</dbReference>
<dbReference type="PROSITE" id="PS00045">
    <property type="entry name" value="HISTONE_LIKE"/>
    <property type="match status" value="1"/>
</dbReference>
<feature type="chain" id="PRO_1000080046" description="Integration host factor subunit beta">
    <location>
        <begin position="1"/>
        <end position="94"/>
    </location>
</feature>
<sequence length="94" mass="10641">MTKSELIENLASTNPNVPLKDIENAVKDILEQLSQALENGERIEIRGFGSFSLHFRQSRIGRNPKTGEKVDLSAKYVPHFKAGKELKERVNIYS</sequence>
<gene>
    <name evidence="1" type="primary">ihfB</name>
    <name evidence="1" type="synonym">himD</name>
    <name type="ordered locus">HSM_1453</name>
</gene>
<comment type="function">
    <text evidence="1">This protein is one of the two subunits of integration host factor, a specific DNA-binding protein that functions in genetic recombination as well as in transcriptional and translational control.</text>
</comment>
<comment type="subunit">
    <text evidence="1">Heterodimer of an alpha and a beta chain.</text>
</comment>
<comment type="similarity">
    <text evidence="1">Belongs to the bacterial histone-like protein family.</text>
</comment>
<organism>
    <name type="scientific">Histophilus somni (strain 2336)</name>
    <name type="common">Haemophilus somnus</name>
    <dbReference type="NCBI Taxonomy" id="228400"/>
    <lineage>
        <taxon>Bacteria</taxon>
        <taxon>Pseudomonadati</taxon>
        <taxon>Pseudomonadota</taxon>
        <taxon>Gammaproteobacteria</taxon>
        <taxon>Pasteurellales</taxon>
        <taxon>Pasteurellaceae</taxon>
        <taxon>Histophilus</taxon>
    </lineage>
</organism>
<evidence type="ECO:0000255" key="1">
    <source>
        <dbReference type="HAMAP-Rule" id="MF_00381"/>
    </source>
</evidence>
<keyword id="KW-0233">DNA recombination</keyword>
<keyword id="KW-0238">DNA-binding</keyword>
<keyword id="KW-0804">Transcription</keyword>
<keyword id="KW-0805">Transcription regulation</keyword>
<keyword id="KW-0810">Translation regulation</keyword>
<accession>B0UUH4</accession>
<reference key="1">
    <citation type="submission" date="2008-02" db="EMBL/GenBank/DDBJ databases">
        <title>Complete sequence of Haemophilus somnus 2336.</title>
        <authorList>
            <consortium name="US DOE Joint Genome Institute"/>
            <person name="Siddaramappa S."/>
            <person name="Duncan A.J."/>
            <person name="Challacombe J.F."/>
            <person name="Rainey D."/>
            <person name="Gillaspy A.F."/>
            <person name="Carson M."/>
            <person name="Gipson J."/>
            <person name="Gipson M."/>
            <person name="Bruce D."/>
            <person name="Detter J.C."/>
            <person name="Han C.S."/>
            <person name="Land M."/>
            <person name="Tapia R."/>
            <person name="Thompson L.S."/>
            <person name="Orvis J."/>
            <person name="Zaitshik J."/>
            <person name="Barnes G."/>
            <person name="Brettin T.S."/>
            <person name="Dyer D.W."/>
            <person name="Inzana T.J."/>
        </authorList>
    </citation>
    <scope>NUCLEOTIDE SEQUENCE [LARGE SCALE GENOMIC DNA]</scope>
    <source>
        <strain>2336</strain>
    </source>
</reference>
<name>IHFB_HISS2</name>
<proteinExistence type="inferred from homology"/>
<protein>
    <recommendedName>
        <fullName evidence="1">Integration host factor subunit beta</fullName>
        <shortName evidence="1">IHF-beta</shortName>
    </recommendedName>
</protein>